<reference key="1">
    <citation type="journal article" date="2011" name="J. Bacteriol.">
        <title>Genome of Ochrobactrum anthropi ATCC 49188 T, a versatile opportunistic pathogen and symbiont of several eukaryotic hosts.</title>
        <authorList>
            <person name="Chain P.S."/>
            <person name="Lang D.M."/>
            <person name="Comerci D.J."/>
            <person name="Malfatti S.A."/>
            <person name="Vergez L.M."/>
            <person name="Shin M."/>
            <person name="Ugalde R.A."/>
            <person name="Garcia E."/>
            <person name="Tolmasky M.E."/>
        </authorList>
    </citation>
    <scope>NUCLEOTIDE SEQUENCE [LARGE SCALE GENOMIC DNA]</scope>
    <source>
        <strain>ATCC 49188 / DSM 6882 / CCUG 24695 / JCM 21032 / LMG 3331 / NBRC 15819 / NCTC 12168 / Alc 37</strain>
    </source>
</reference>
<gene>
    <name evidence="1" type="primary">rlmN</name>
    <name type="ordered locus">Oant_0090</name>
</gene>
<protein>
    <recommendedName>
        <fullName evidence="1">Dual-specificity RNA methyltransferase RlmN</fullName>
        <ecNumber evidence="1">2.1.1.192</ecNumber>
    </recommendedName>
    <alternativeName>
        <fullName evidence="1">23S rRNA (adenine(2503)-C(2))-methyltransferase</fullName>
    </alternativeName>
    <alternativeName>
        <fullName evidence="1">23S rRNA m2A2503 methyltransferase</fullName>
    </alternativeName>
    <alternativeName>
        <fullName evidence="1">Ribosomal RNA large subunit methyltransferase N</fullName>
    </alternativeName>
    <alternativeName>
        <fullName evidence="1">tRNA (adenine(37)-C(2))-methyltransferase</fullName>
    </alternativeName>
    <alternativeName>
        <fullName evidence="1">tRNA m2A37 methyltransferase</fullName>
    </alternativeName>
</protein>
<accession>A6WV17</accession>
<name>RLMN_BRUA4</name>
<proteinExistence type="inferred from homology"/>
<organism>
    <name type="scientific">Brucella anthropi (strain ATCC 49188 / DSM 6882 / CCUG 24695 / JCM 21032 / LMG 3331 / NBRC 15819 / NCTC 12168 / Alc 37)</name>
    <name type="common">Ochrobactrum anthropi</name>
    <dbReference type="NCBI Taxonomy" id="439375"/>
    <lineage>
        <taxon>Bacteria</taxon>
        <taxon>Pseudomonadati</taxon>
        <taxon>Pseudomonadota</taxon>
        <taxon>Alphaproteobacteria</taxon>
        <taxon>Hyphomicrobiales</taxon>
        <taxon>Brucellaceae</taxon>
        <taxon>Brucella/Ochrobactrum group</taxon>
        <taxon>Brucella</taxon>
    </lineage>
</organism>
<keyword id="KW-0004">4Fe-4S</keyword>
<keyword id="KW-0963">Cytoplasm</keyword>
<keyword id="KW-1015">Disulfide bond</keyword>
<keyword id="KW-0408">Iron</keyword>
<keyword id="KW-0411">Iron-sulfur</keyword>
<keyword id="KW-0479">Metal-binding</keyword>
<keyword id="KW-0489">Methyltransferase</keyword>
<keyword id="KW-1185">Reference proteome</keyword>
<keyword id="KW-0698">rRNA processing</keyword>
<keyword id="KW-0949">S-adenosyl-L-methionine</keyword>
<keyword id="KW-0808">Transferase</keyword>
<keyword id="KW-0819">tRNA processing</keyword>
<dbReference type="EC" id="2.1.1.192" evidence="1"/>
<dbReference type="EMBL" id="CP000758">
    <property type="protein sequence ID" value="ABS12821.1"/>
    <property type="molecule type" value="Genomic_DNA"/>
</dbReference>
<dbReference type="RefSeq" id="WP_011982317.1">
    <property type="nucleotide sequence ID" value="NC_009667.1"/>
</dbReference>
<dbReference type="SMR" id="A6WV17"/>
<dbReference type="STRING" id="439375.Oant_0090"/>
<dbReference type="KEGG" id="oan:Oant_0090"/>
<dbReference type="PATRIC" id="fig|439375.7.peg.92"/>
<dbReference type="eggNOG" id="COG0820">
    <property type="taxonomic scope" value="Bacteria"/>
</dbReference>
<dbReference type="HOGENOM" id="CLU_029101_2_0_5"/>
<dbReference type="PhylomeDB" id="A6WV17"/>
<dbReference type="Proteomes" id="UP000002301">
    <property type="component" value="Chromosome 1"/>
</dbReference>
<dbReference type="GO" id="GO:0005737">
    <property type="term" value="C:cytoplasm"/>
    <property type="evidence" value="ECO:0007669"/>
    <property type="project" value="UniProtKB-SubCell"/>
</dbReference>
<dbReference type="GO" id="GO:0051539">
    <property type="term" value="F:4 iron, 4 sulfur cluster binding"/>
    <property type="evidence" value="ECO:0007669"/>
    <property type="project" value="UniProtKB-UniRule"/>
</dbReference>
<dbReference type="GO" id="GO:0046872">
    <property type="term" value="F:metal ion binding"/>
    <property type="evidence" value="ECO:0007669"/>
    <property type="project" value="UniProtKB-KW"/>
</dbReference>
<dbReference type="GO" id="GO:0070040">
    <property type="term" value="F:rRNA (adenine(2503)-C2-)-methyltransferase activity"/>
    <property type="evidence" value="ECO:0007669"/>
    <property type="project" value="UniProtKB-UniRule"/>
</dbReference>
<dbReference type="GO" id="GO:0019843">
    <property type="term" value="F:rRNA binding"/>
    <property type="evidence" value="ECO:0007669"/>
    <property type="project" value="UniProtKB-UniRule"/>
</dbReference>
<dbReference type="GO" id="GO:0002935">
    <property type="term" value="F:tRNA (adenine(37)-C2)-methyltransferase activity"/>
    <property type="evidence" value="ECO:0007669"/>
    <property type="project" value="UniProtKB-UniRule"/>
</dbReference>
<dbReference type="GO" id="GO:0000049">
    <property type="term" value="F:tRNA binding"/>
    <property type="evidence" value="ECO:0007669"/>
    <property type="project" value="UniProtKB-UniRule"/>
</dbReference>
<dbReference type="GO" id="GO:0070475">
    <property type="term" value="P:rRNA base methylation"/>
    <property type="evidence" value="ECO:0007669"/>
    <property type="project" value="UniProtKB-UniRule"/>
</dbReference>
<dbReference type="GO" id="GO:0030488">
    <property type="term" value="P:tRNA methylation"/>
    <property type="evidence" value="ECO:0007669"/>
    <property type="project" value="UniProtKB-UniRule"/>
</dbReference>
<dbReference type="CDD" id="cd01335">
    <property type="entry name" value="Radical_SAM"/>
    <property type="match status" value="1"/>
</dbReference>
<dbReference type="FunFam" id="3.20.20.70:FF:000008">
    <property type="entry name" value="Dual-specificity RNA methyltransferase RlmN"/>
    <property type="match status" value="1"/>
</dbReference>
<dbReference type="Gene3D" id="1.10.150.530">
    <property type="match status" value="1"/>
</dbReference>
<dbReference type="Gene3D" id="3.20.20.70">
    <property type="entry name" value="Aldolase class I"/>
    <property type="match status" value="1"/>
</dbReference>
<dbReference type="HAMAP" id="MF_01849">
    <property type="entry name" value="RNA_methyltr_RlmN"/>
    <property type="match status" value="1"/>
</dbReference>
<dbReference type="InterPro" id="IPR013785">
    <property type="entry name" value="Aldolase_TIM"/>
</dbReference>
<dbReference type="InterPro" id="IPR040072">
    <property type="entry name" value="Methyltransferase_A"/>
</dbReference>
<dbReference type="InterPro" id="IPR048641">
    <property type="entry name" value="RlmN_N"/>
</dbReference>
<dbReference type="InterPro" id="IPR027492">
    <property type="entry name" value="RNA_MTrfase_RlmN"/>
</dbReference>
<dbReference type="InterPro" id="IPR004383">
    <property type="entry name" value="rRNA_lsu_MTrfase_RlmN/Cfr"/>
</dbReference>
<dbReference type="InterPro" id="IPR007197">
    <property type="entry name" value="rSAM"/>
</dbReference>
<dbReference type="NCBIfam" id="TIGR00048">
    <property type="entry name" value="rRNA_mod_RlmN"/>
    <property type="match status" value="1"/>
</dbReference>
<dbReference type="PANTHER" id="PTHR30544">
    <property type="entry name" value="23S RRNA METHYLTRANSFERASE"/>
    <property type="match status" value="1"/>
</dbReference>
<dbReference type="PANTHER" id="PTHR30544:SF5">
    <property type="entry name" value="RADICAL SAM CORE DOMAIN-CONTAINING PROTEIN"/>
    <property type="match status" value="1"/>
</dbReference>
<dbReference type="Pfam" id="PF04055">
    <property type="entry name" value="Radical_SAM"/>
    <property type="match status" value="1"/>
</dbReference>
<dbReference type="Pfam" id="PF21016">
    <property type="entry name" value="RlmN_N"/>
    <property type="match status" value="1"/>
</dbReference>
<dbReference type="PIRSF" id="PIRSF006004">
    <property type="entry name" value="CHP00048"/>
    <property type="match status" value="1"/>
</dbReference>
<dbReference type="SFLD" id="SFLDF00275">
    <property type="entry name" value="adenosine_C2_methyltransferase"/>
    <property type="match status" value="1"/>
</dbReference>
<dbReference type="SFLD" id="SFLDS00029">
    <property type="entry name" value="Radical_SAM"/>
    <property type="match status" value="1"/>
</dbReference>
<dbReference type="SUPFAM" id="SSF102114">
    <property type="entry name" value="Radical SAM enzymes"/>
    <property type="match status" value="1"/>
</dbReference>
<dbReference type="PROSITE" id="PS51918">
    <property type="entry name" value="RADICAL_SAM"/>
    <property type="match status" value="1"/>
</dbReference>
<comment type="function">
    <text evidence="1">Specifically methylates position 2 of adenine 2503 in 23S rRNA and position 2 of adenine 37 in tRNAs. m2A2503 modification seems to play a crucial role in the proofreading step occurring at the peptidyl transferase center and thus would serve to optimize ribosomal fidelity.</text>
</comment>
<comment type="catalytic activity">
    <reaction evidence="1">
        <text>adenosine(2503) in 23S rRNA + 2 reduced [2Fe-2S]-[ferredoxin] + 2 S-adenosyl-L-methionine = 2-methyladenosine(2503) in 23S rRNA + 5'-deoxyadenosine + L-methionine + 2 oxidized [2Fe-2S]-[ferredoxin] + S-adenosyl-L-homocysteine</text>
        <dbReference type="Rhea" id="RHEA:42916"/>
        <dbReference type="Rhea" id="RHEA-COMP:10000"/>
        <dbReference type="Rhea" id="RHEA-COMP:10001"/>
        <dbReference type="Rhea" id="RHEA-COMP:10152"/>
        <dbReference type="Rhea" id="RHEA-COMP:10282"/>
        <dbReference type="ChEBI" id="CHEBI:17319"/>
        <dbReference type="ChEBI" id="CHEBI:33737"/>
        <dbReference type="ChEBI" id="CHEBI:33738"/>
        <dbReference type="ChEBI" id="CHEBI:57844"/>
        <dbReference type="ChEBI" id="CHEBI:57856"/>
        <dbReference type="ChEBI" id="CHEBI:59789"/>
        <dbReference type="ChEBI" id="CHEBI:74411"/>
        <dbReference type="ChEBI" id="CHEBI:74497"/>
        <dbReference type="EC" id="2.1.1.192"/>
    </reaction>
</comment>
<comment type="catalytic activity">
    <reaction evidence="1">
        <text>adenosine(37) in tRNA + 2 reduced [2Fe-2S]-[ferredoxin] + 2 S-adenosyl-L-methionine = 2-methyladenosine(37) in tRNA + 5'-deoxyadenosine + L-methionine + 2 oxidized [2Fe-2S]-[ferredoxin] + S-adenosyl-L-homocysteine</text>
        <dbReference type="Rhea" id="RHEA:43332"/>
        <dbReference type="Rhea" id="RHEA-COMP:10000"/>
        <dbReference type="Rhea" id="RHEA-COMP:10001"/>
        <dbReference type="Rhea" id="RHEA-COMP:10162"/>
        <dbReference type="Rhea" id="RHEA-COMP:10485"/>
        <dbReference type="ChEBI" id="CHEBI:17319"/>
        <dbReference type="ChEBI" id="CHEBI:33737"/>
        <dbReference type="ChEBI" id="CHEBI:33738"/>
        <dbReference type="ChEBI" id="CHEBI:57844"/>
        <dbReference type="ChEBI" id="CHEBI:57856"/>
        <dbReference type="ChEBI" id="CHEBI:59789"/>
        <dbReference type="ChEBI" id="CHEBI:74411"/>
        <dbReference type="ChEBI" id="CHEBI:74497"/>
        <dbReference type="EC" id="2.1.1.192"/>
    </reaction>
</comment>
<comment type="cofactor">
    <cofactor evidence="1">
        <name>[4Fe-4S] cluster</name>
        <dbReference type="ChEBI" id="CHEBI:49883"/>
    </cofactor>
    <text evidence="1">Binds 1 [4Fe-4S] cluster. The cluster is coordinated with 3 cysteines and an exchangeable S-adenosyl-L-methionine.</text>
</comment>
<comment type="subcellular location">
    <subcellularLocation>
        <location evidence="1">Cytoplasm</location>
    </subcellularLocation>
</comment>
<comment type="miscellaneous">
    <text evidence="1">Reaction proceeds by a ping-pong mechanism involving intermediate methylation of a conserved cysteine residue.</text>
</comment>
<comment type="similarity">
    <text evidence="1">Belongs to the radical SAM superfamily. RlmN family.</text>
</comment>
<sequence length="411" mass="46070">MSISFDLTIDDTRDQLARHARASLEAKPSLIGMSREEMAEALIKAGVPERQVKMRISQLWHWLYVRGVSDFADMRNISKDLRAMLAQHFTIARPEVVEEQISQDGTRKWLFRFPPRGAGRPVEIESVYIPEEGRGTLCVSSQVGCTLTCSFCHTGTQKLVRNLTSEEILAQLLTARDRLGDFPDKDTPDGAMVPAEGRKITNIVMMGMGEPLYNFEEVKKALLIASDGDGLSLSKRRITLSTSGVVPEIYRTGDEIGVMLAISLHAVRDELRDILVPINKKYPLEQLIKACREYPGLSNAKRITFEYVMLKDINDSLEDAKLLVKLLQGIPAKINLIPFNPWPGTNYQCSEWEQIEKFADYVNAAGYASPIRTPRGRDILAACGQLKSESERMRKSERLALEAMMIAGHGE</sequence>
<feature type="chain" id="PRO_0000350293" description="Dual-specificity RNA methyltransferase RlmN">
    <location>
        <begin position="1"/>
        <end position="411"/>
    </location>
</feature>
<feature type="domain" description="Radical SAM core" evidence="2">
    <location>
        <begin position="131"/>
        <end position="380"/>
    </location>
</feature>
<feature type="active site" description="Proton acceptor" evidence="1">
    <location>
        <position position="125"/>
    </location>
</feature>
<feature type="active site" description="S-methylcysteine intermediate" evidence="1">
    <location>
        <position position="383"/>
    </location>
</feature>
<feature type="binding site" evidence="1">
    <location>
        <position position="145"/>
    </location>
    <ligand>
        <name>[4Fe-4S] cluster</name>
        <dbReference type="ChEBI" id="CHEBI:49883"/>
        <note>4Fe-4S-S-AdoMet</note>
    </ligand>
</feature>
<feature type="binding site" evidence="1">
    <location>
        <position position="149"/>
    </location>
    <ligand>
        <name>[4Fe-4S] cluster</name>
        <dbReference type="ChEBI" id="CHEBI:49883"/>
        <note>4Fe-4S-S-AdoMet</note>
    </ligand>
</feature>
<feature type="binding site" evidence="1">
    <location>
        <position position="152"/>
    </location>
    <ligand>
        <name>[4Fe-4S] cluster</name>
        <dbReference type="ChEBI" id="CHEBI:49883"/>
        <note>4Fe-4S-S-AdoMet</note>
    </ligand>
</feature>
<feature type="binding site" evidence="1">
    <location>
        <begin position="209"/>
        <end position="210"/>
    </location>
    <ligand>
        <name>S-adenosyl-L-methionine</name>
        <dbReference type="ChEBI" id="CHEBI:59789"/>
    </ligand>
</feature>
<feature type="binding site" evidence="1">
    <location>
        <position position="241"/>
    </location>
    <ligand>
        <name>S-adenosyl-L-methionine</name>
        <dbReference type="ChEBI" id="CHEBI:59789"/>
    </ligand>
</feature>
<feature type="binding site" evidence="1">
    <location>
        <begin position="263"/>
        <end position="265"/>
    </location>
    <ligand>
        <name>S-adenosyl-L-methionine</name>
        <dbReference type="ChEBI" id="CHEBI:59789"/>
    </ligand>
</feature>
<feature type="binding site" evidence="1">
    <location>
        <position position="340"/>
    </location>
    <ligand>
        <name>S-adenosyl-L-methionine</name>
        <dbReference type="ChEBI" id="CHEBI:59789"/>
    </ligand>
</feature>
<feature type="disulfide bond" description="(transient)" evidence="1">
    <location>
        <begin position="138"/>
        <end position="383"/>
    </location>
</feature>
<evidence type="ECO:0000255" key="1">
    <source>
        <dbReference type="HAMAP-Rule" id="MF_01849"/>
    </source>
</evidence>
<evidence type="ECO:0000255" key="2">
    <source>
        <dbReference type="PROSITE-ProRule" id="PRU01266"/>
    </source>
</evidence>